<reference key="1">
    <citation type="journal article" date="2002" name="DNA Res.">
        <title>Complete genome structure of the thermophilic cyanobacterium Thermosynechococcus elongatus BP-1.</title>
        <authorList>
            <person name="Nakamura Y."/>
            <person name="Kaneko T."/>
            <person name="Sato S."/>
            <person name="Ikeuchi M."/>
            <person name="Katoh H."/>
            <person name="Sasamoto S."/>
            <person name="Watanabe A."/>
            <person name="Iriguchi M."/>
            <person name="Kawashima K."/>
            <person name="Kimura T."/>
            <person name="Kishida Y."/>
            <person name="Kiyokawa C."/>
            <person name="Kohara M."/>
            <person name="Matsumoto M."/>
            <person name="Matsuno A."/>
            <person name="Nakazaki N."/>
            <person name="Shimpo S."/>
            <person name="Sugimoto M."/>
            <person name="Takeuchi C."/>
            <person name="Yamada M."/>
            <person name="Tabata S."/>
        </authorList>
    </citation>
    <scope>NUCLEOTIDE SEQUENCE [LARGE SCALE GENOMIC DNA]</scope>
    <source>
        <strain>NIES-2133 / IAM M-273 / BP-1</strain>
    </source>
</reference>
<sequence>MQIQMLLPLVQTLAQQVADQEHLDLVSVQWLTHQSPPILRVEVRHPENDTSLEDCERLSRALEMALDELPEFEFAYVLEVSSPGLSDYLSSDRDFDAFRGFPVRVTTTAPHRGKTLWEGNLIRRDEVNVYLNQRGRSLAIPRSLIASVQLYTPSSEP</sequence>
<evidence type="ECO:0000255" key="1">
    <source>
        <dbReference type="HAMAP-Rule" id="MF_01077"/>
    </source>
</evidence>
<evidence type="ECO:0000305" key="2"/>
<accession>Q8DHL1</accession>
<keyword id="KW-0963">Cytoplasm</keyword>
<keyword id="KW-1185">Reference proteome</keyword>
<keyword id="KW-0690">Ribosome biogenesis</keyword>
<dbReference type="EMBL" id="BA000039">
    <property type="protein sequence ID" value="BAC09490.1"/>
    <property type="status" value="ALT_INIT"/>
    <property type="molecule type" value="Genomic_DNA"/>
</dbReference>
<dbReference type="RefSeq" id="NP_682728.1">
    <property type="nucleotide sequence ID" value="NC_004113.1"/>
</dbReference>
<dbReference type="SMR" id="Q8DHL1"/>
<dbReference type="STRING" id="197221.gene:10748545"/>
<dbReference type="EnsemblBacteria" id="BAC09490">
    <property type="protein sequence ID" value="BAC09490"/>
    <property type="gene ID" value="BAC09490"/>
</dbReference>
<dbReference type="KEGG" id="tel:tll1938"/>
<dbReference type="PATRIC" id="fig|197221.4.peg.2026"/>
<dbReference type="eggNOG" id="COG0779">
    <property type="taxonomic scope" value="Bacteria"/>
</dbReference>
<dbReference type="Proteomes" id="UP000000440">
    <property type="component" value="Chromosome"/>
</dbReference>
<dbReference type="GO" id="GO:0005829">
    <property type="term" value="C:cytosol"/>
    <property type="evidence" value="ECO:0007669"/>
    <property type="project" value="TreeGrafter"/>
</dbReference>
<dbReference type="GO" id="GO:0000028">
    <property type="term" value="P:ribosomal small subunit assembly"/>
    <property type="evidence" value="ECO:0007669"/>
    <property type="project" value="TreeGrafter"/>
</dbReference>
<dbReference type="GO" id="GO:0006412">
    <property type="term" value="P:translation"/>
    <property type="evidence" value="ECO:0007669"/>
    <property type="project" value="TreeGrafter"/>
</dbReference>
<dbReference type="Gene3D" id="3.30.300.70">
    <property type="entry name" value="RimP-like superfamily, N-terminal"/>
    <property type="match status" value="1"/>
</dbReference>
<dbReference type="HAMAP" id="MF_01077">
    <property type="entry name" value="RimP"/>
    <property type="match status" value="1"/>
</dbReference>
<dbReference type="InterPro" id="IPR003728">
    <property type="entry name" value="Ribosome_maturation_RimP"/>
</dbReference>
<dbReference type="InterPro" id="IPR036847">
    <property type="entry name" value="RimP_C_sf"/>
</dbReference>
<dbReference type="InterPro" id="IPR028989">
    <property type="entry name" value="RimP_N"/>
</dbReference>
<dbReference type="InterPro" id="IPR035956">
    <property type="entry name" value="RimP_N_sf"/>
</dbReference>
<dbReference type="NCBIfam" id="NF000935">
    <property type="entry name" value="PRK00092.3-3"/>
    <property type="match status" value="1"/>
</dbReference>
<dbReference type="PANTHER" id="PTHR33867">
    <property type="entry name" value="RIBOSOME MATURATION FACTOR RIMP"/>
    <property type="match status" value="1"/>
</dbReference>
<dbReference type="PANTHER" id="PTHR33867:SF1">
    <property type="entry name" value="RIBOSOME MATURATION FACTOR RIMP"/>
    <property type="match status" value="1"/>
</dbReference>
<dbReference type="Pfam" id="PF02576">
    <property type="entry name" value="RimP_N"/>
    <property type="match status" value="1"/>
</dbReference>
<dbReference type="SUPFAM" id="SSF74942">
    <property type="entry name" value="YhbC-like, C-terminal domain"/>
    <property type="match status" value="1"/>
</dbReference>
<dbReference type="SUPFAM" id="SSF75420">
    <property type="entry name" value="YhbC-like, N-terminal domain"/>
    <property type="match status" value="1"/>
</dbReference>
<protein>
    <recommendedName>
        <fullName evidence="1">Ribosome maturation factor RimP</fullName>
    </recommendedName>
</protein>
<organism>
    <name type="scientific">Thermosynechococcus vestitus (strain NIES-2133 / IAM M-273 / BP-1)</name>
    <dbReference type="NCBI Taxonomy" id="197221"/>
    <lineage>
        <taxon>Bacteria</taxon>
        <taxon>Bacillati</taxon>
        <taxon>Cyanobacteriota</taxon>
        <taxon>Cyanophyceae</taxon>
        <taxon>Acaryochloridales</taxon>
        <taxon>Thermosynechococcaceae</taxon>
        <taxon>Thermosynechococcus</taxon>
    </lineage>
</organism>
<name>RIMP_THEVB</name>
<comment type="function">
    <text evidence="1">Required for maturation of 30S ribosomal subunits.</text>
</comment>
<comment type="subcellular location">
    <subcellularLocation>
        <location evidence="1">Cytoplasm</location>
    </subcellularLocation>
</comment>
<comment type="similarity">
    <text evidence="1">Belongs to the RimP family.</text>
</comment>
<comment type="sequence caution" evidence="2">
    <conflict type="erroneous initiation">
        <sequence resource="EMBL-CDS" id="BAC09490"/>
    </conflict>
</comment>
<proteinExistence type="inferred from homology"/>
<gene>
    <name evidence="1" type="primary">rimP</name>
    <name type="ordered locus">tll1938</name>
</gene>
<feature type="chain" id="PRO_0000181940" description="Ribosome maturation factor RimP">
    <location>
        <begin position="1"/>
        <end position="157"/>
    </location>
</feature>